<feature type="chain" id="PRO_0000425780" description="ADP/ATP translocase 3">
    <location>
        <begin position="1"/>
        <end position="298"/>
    </location>
</feature>
<feature type="initiator methionine" description="Removed; alternate" evidence="4">
    <location>
        <position position="1"/>
    </location>
</feature>
<feature type="chain" id="PRO_0000090583" description="ADP/ATP translocase 3, N-terminally processed">
    <location>
        <begin position="2"/>
        <end position="298"/>
    </location>
</feature>
<feature type="topological domain" description="Mitochondrial intermembrane" evidence="10">
    <location>
        <begin position="1"/>
        <end position="7"/>
    </location>
</feature>
<feature type="transmembrane region" description="Helical; Name=1" evidence="2">
    <location>
        <begin position="8"/>
        <end position="37"/>
    </location>
</feature>
<feature type="topological domain" description="Mitochondrial matrix" evidence="10">
    <location>
        <begin position="38"/>
        <end position="74"/>
    </location>
</feature>
<feature type="transmembrane region" description="Helical; Name=2" evidence="2">
    <location>
        <begin position="75"/>
        <end position="99"/>
    </location>
</feature>
<feature type="topological domain" description="Mitochondrial intermembrane" evidence="10">
    <location>
        <begin position="100"/>
        <end position="109"/>
    </location>
</feature>
<feature type="transmembrane region" description="Helical; Name=3" evidence="2">
    <location>
        <begin position="110"/>
        <end position="130"/>
    </location>
</feature>
<feature type="topological domain" description="Mitochondrial matrix" evidence="10">
    <location>
        <begin position="131"/>
        <end position="178"/>
    </location>
</feature>
<feature type="transmembrane region" description="Helical; Name=4" evidence="2">
    <location>
        <begin position="179"/>
        <end position="199"/>
    </location>
</feature>
<feature type="topological domain" description="Mitochondrial intermembrane" evidence="10">
    <location>
        <begin position="200"/>
        <end position="210"/>
    </location>
</feature>
<feature type="transmembrane region" description="Helical; Name=5" evidence="2">
    <location>
        <begin position="211"/>
        <end position="231"/>
    </location>
</feature>
<feature type="topological domain" description="Mitochondrial matrix" evidence="10">
    <location>
        <begin position="232"/>
        <end position="273"/>
    </location>
</feature>
<feature type="transmembrane region" description="Helical; Name=6" evidence="2">
    <location>
        <begin position="274"/>
        <end position="291"/>
    </location>
</feature>
<feature type="topological domain" description="Mitochondrial intermembrane" evidence="10">
    <location>
        <begin position="292"/>
        <end position="298"/>
    </location>
</feature>
<feature type="repeat" description="Solcar 1">
    <location>
        <begin position="6"/>
        <end position="98"/>
    </location>
</feature>
<feature type="repeat" description="Solcar 2">
    <location>
        <begin position="111"/>
        <end position="201"/>
    </location>
</feature>
<feature type="repeat" description="Solcar 3">
    <location>
        <begin position="212"/>
        <end position="297"/>
    </location>
</feature>
<feature type="region of interest" description="Important for transport activity" evidence="3">
    <location>
        <begin position="235"/>
        <end position="240"/>
    </location>
</feature>
<feature type="short sequence motif" description="Nucleotide carrier signature motif" evidence="2">
    <location>
        <begin position="235"/>
        <end position="240"/>
    </location>
</feature>
<feature type="binding site" evidence="2">
    <location>
        <position position="80"/>
    </location>
    <ligand>
        <name>ADP</name>
        <dbReference type="ChEBI" id="CHEBI:456216"/>
    </ligand>
</feature>
<feature type="binding site" evidence="2">
    <location>
        <position position="92"/>
    </location>
    <ligand>
        <name>ADP</name>
        <dbReference type="ChEBI" id="CHEBI:456216"/>
    </ligand>
</feature>
<feature type="binding site" evidence="2">
    <location>
        <position position="235"/>
    </location>
    <ligand>
        <name>ADP</name>
        <dbReference type="ChEBI" id="CHEBI:456216"/>
    </ligand>
</feature>
<feature type="modified residue" description="N-acetylmethionine" evidence="4">
    <location>
        <position position="1"/>
    </location>
</feature>
<feature type="modified residue" description="N-acetylthreonine; in ADP/ATP translocase 3, N-terminally processed" evidence="4">
    <location>
        <position position="2"/>
    </location>
</feature>
<feature type="modified residue" description="N6,N6,N6-trimethyllysine" evidence="4">
    <location>
        <position position="52"/>
    </location>
</feature>
<feature type="modified residue" description="N6-acetyllysine" evidence="4">
    <location>
        <position position="105"/>
    </location>
</feature>
<feature type="modified residue" description="N6-acetyllysine" evidence="4">
    <location>
        <position position="268"/>
    </location>
</feature>
<comment type="function">
    <text evidence="1 4 5">ADP:ATP antiporter that mediates import of ADP into the mitochondrial matrix for ATP synthesis, and export of ATP out to fuel the cell (By similarity). Cycles between the cytoplasmic-open state (c-state) and the matrix-open state (m-state): operates by the alternating access mechanism with a single substrate-binding site intermittently exposed to either the cytosolic (c-state) or matrix (m-state) side of the inner mitochondrial membrane (By similarity). In addition to its ADP:ATP antiporter activity, also involved in mitochondrial uncoupling and mitochondrial permeability transition pore (mPTP) activity (By similarity). Plays a role in mitochondrial uncoupling by acting as a proton transporter: proton transport uncouples the proton flows via the electron transport chain and ATP synthase to reduce the efficiency of ATP production and cause mitochondrial thermogenesis. Proton transporter activity is inhibited by ADP:ATP antiporter activity, suggesting that SLC25A6/ANT3 acts as a master regulator of mitochondrial energy output by maintaining a delicate balance between ATP production (ADP:ATP antiporter activity) and thermogenesis (proton transporter activity). Proton transporter activity requires free fatty acids as cofactor, but does not transport it (By similarity). Also plays a key role in mPTP opening, a non-specific pore that enables free passage of the mitochondrial membranes to solutes of up to 1.5 kDa, and which contributes to cell death (By similarity). It is however unclear if SLC25A6/ANT3 constitutes a pore-forming component of mPTP or regulates it (By similarity).</text>
</comment>
<comment type="catalytic activity">
    <reaction evidence="5">
        <text>ADP(in) + ATP(out) = ADP(out) + ATP(in)</text>
        <dbReference type="Rhea" id="RHEA:34999"/>
        <dbReference type="ChEBI" id="CHEBI:30616"/>
        <dbReference type="ChEBI" id="CHEBI:456216"/>
    </reaction>
</comment>
<comment type="catalytic activity">
    <reaction evidence="5">
        <text>H(+)(in) = H(+)(out)</text>
        <dbReference type="Rhea" id="RHEA:34979"/>
        <dbReference type="ChEBI" id="CHEBI:15378"/>
    </reaction>
</comment>
<comment type="activity regulation">
    <text evidence="1 5">The matrix-open state (m-state) is inhibited by the membrane-permeable bongkrekic acid (BKA). The cytoplasmic-open state (c-state) is inhibited by the membrane-impermeable toxic inhibitor carboxyatractyloside (CATR) (By similarity). Proton transporter activity is inhibited by ADP:ATP antiporter activity (By similarity).</text>
</comment>
<comment type="subunit">
    <text evidence="1 2 7">Monomer (By similarity). Found in a complex with ARL2, ARL2BP and SLC25A6/ANT3 (PubMed:11809823).</text>
</comment>
<comment type="subcellular location">
    <subcellularLocation>
        <location evidence="2">Mitochondrion inner membrane</location>
        <topology evidence="6">Multi-pass membrane protein</topology>
    </subcellularLocation>
    <subcellularLocation>
        <location evidence="4">Membrane</location>
        <topology evidence="6">Multi-pass membrane protein</topology>
    </subcellularLocation>
    <text evidence="3">The complex formed with ARL2BP, ARL2 and SLC25A6/ANT3 is expressed in mitochondria (By similarity). May localize to non-mitochondrial membranes (By similarity).</text>
</comment>
<comment type="domain">
    <text evidence="2">The transmembrane helices are not perpendicular to the plane of the membrane, but cross the membrane at an angle. Odd-numbered transmembrane helices exhibit a sharp kink, due to the presence of a conserved proline residue.</text>
</comment>
<comment type="PTM">
    <text evidence="4">Trimethylated by ANTKMT at Lys-52.</text>
</comment>
<comment type="similarity">
    <text evidence="10">Belongs to the mitochondrial carrier (TC 2.A.29) family.</text>
</comment>
<comment type="caution">
    <text evidence="1 2 7">Was reported as a homodimer (PubMed:11809823). However, 3D structure data show that it forms a monomer (By similarity).</text>
</comment>
<name>ADT3_BOVIN</name>
<sequence length="298" mass="32877">MTEQAISFAKDFLAGGIAAAISKTAVAPIERVKLLLQVQHASKQIAADKQYKGIVDCIVRIPKEQGVLSFWRGNLANVIRYFPTQALNFAFKDKYKQIFLGGVDKRTQFWRYFAGNLASGGAAGATSLCFVYPLDFARTRLAADVGKSGSEREFRGLGDCLVKITKSDGIRGLYQGFNVSVQGIIIYRAAYFGIYDTAKGMLPDPKNTHIVVSWMIAQTVTAVAGVVSYPFDTVRRRMMMQSGRKGADIMYKGTVDCWRKILKDEGGKAFFKGAWSNVLRGMGGAFVLVLYDELKKVI</sequence>
<organism>
    <name type="scientific">Bos taurus</name>
    <name type="common">Bovine</name>
    <dbReference type="NCBI Taxonomy" id="9913"/>
    <lineage>
        <taxon>Eukaryota</taxon>
        <taxon>Metazoa</taxon>
        <taxon>Chordata</taxon>
        <taxon>Craniata</taxon>
        <taxon>Vertebrata</taxon>
        <taxon>Euteleostomi</taxon>
        <taxon>Mammalia</taxon>
        <taxon>Eutheria</taxon>
        <taxon>Laurasiatheria</taxon>
        <taxon>Artiodactyla</taxon>
        <taxon>Ruminantia</taxon>
        <taxon>Pecora</taxon>
        <taxon>Bovidae</taxon>
        <taxon>Bovinae</taxon>
        <taxon>Bos</taxon>
    </lineage>
</organism>
<gene>
    <name evidence="4" type="primary">SLC25A6</name>
    <name evidence="4" type="synonym">AAC3</name>
    <name evidence="8" type="synonym">ANT3</name>
</gene>
<reference key="1">
    <citation type="journal article" date="1989" name="Biochemistry">
        <title>Two bovine genes for mitochondrial ADP/ATP translocase expressed differences in various tissues.</title>
        <authorList>
            <person name="Powell S.J."/>
            <person name="Medd S.M."/>
            <person name="Runswick M.J."/>
            <person name="Walker J.E."/>
        </authorList>
    </citation>
    <scope>NUCLEOTIDE SEQUENCE [MRNA]</scope>
</reference>
<reference key="2">
    <citation type="journal article" date="2005" name="BMC Genomics">
        <title>Characterization of 954 bovine full-CDS cDNA sequences.</title>
        <authorList>
            <person name="Harhay G.P."/>
            <person name="Sonstegard T.S."/>
            <person name="Keele J.W."/>
            <person name="Heaton M.P."/>
            <person name="Clawson M.L."/>
            <person name="Snelling W.M."/>
            <person name="Wiedmann R.T."/>
            <person name="Van Tassell C.P."/>
            <person name="Smith T.P.L."/>
        </authorList>
    </citation>
    <scope>NUCLEOTIDE SEQUENCE [LARGE SCALE MRNA]</scope>
</reference>
<reference key="3">
    <citation type="submission" date="2007-07" db="EMBL/GenBank/DDBJ databases">
        <authorList>
            <consortium name="NIH - Mammalian Gene Collection (MGC) project"/>
        </authorList>
    </citation>
    <scope>NUCLEOTIDE SEQUENCE [LARGE SCALE MRNA]</scope>
    <source>
        <strain>Hereford</strain>
        <tissue>Ovary</tissue>
    </source>
</reference>
<reference key="4">
    <citation type="journal article" date="2002" name="Mol. Biol. Cell">
        <title>ARL2 and BART enter mitochondria and bind the adenine nucleotide transporter.</title>
        <authorList>
            <person name="Sharer J.D."/>
            <person name="Shern J.F."/>
            <person name="Van Valkenburgh H."/>
            <person name="Wallace D.C."/>
            <person name="Kahn R.A."/>
        </authorList>
    </citation>
    <scope>PROTEIN SEQUENCE OF 3-9; 35-43; 65-80 AND 274-280</scope>
    <scope>IDENTIFICATION IN A COMPLEX WITH ARL2 AND ARL2BP</scope>
    <scope>TISSUE SPECIFICITY</scope>
</reference>
<protein>
    <recommendedName>
        <fullName evidence="10">ADP/ATP translocase 3</fullName>
    </recommendedName>
    <alternativeName>
        <fullName evidence="4">ADP,ATP carrier protein 3</fullName>
    </alternativeName>
    <alternativeName>
        <fullName evidence="9">ADP,ATP carrier protein, isoform T2</fullName>
        <shortName evidence="9">ANT 2</shortName>
    </alternativeName>
    <alternativeName>
        <fullName evidence="8">Adenine nucleotide translocator 3</fullName>
        <shortName evidence="8">ANT 3</shortName>
    </alternativeName>
    <alternativeName>
        <fullName evidence="10">Solute carrier family 25 member 6</fullName>
    </alternativeName>
    <component>
        <recommendedName>
            <fullName>ADP/ATP translocase 3, N-terminally processed</fullName>
        </recommendedName>
    </component>
</protein>
<accession>P32007</accession>
<accession>A1L5C3</accession>
<accession>A6QQX7</accession>
<dbReference type="EMBL" id="M24103">
    <property type="protein sequence ID" value="AAA30769.1"/>
    <property type="molecule type" value="mRNA"/>
</dbReference>
<dbReference type="EMBL" id="BT029910">
    <property type="protein sequence ID" value="ABM06156.1"/>
    <property type="molecule type" value="mRNA"/>
</dbReference>
<dbReference type="EMBL" id="BC150034">
    <property type="protein sequence ID" value="AAI50035.1"/>
    <property type="molecule type" value="mRNA"/>
</dbReference>
<dbReference type="PIR" id="B43646">
    <property type="entry name" value="B43646"/>
</dbReference>
<dbReference type="RefSeq" id="NP_777085.1">
    <property type="nucleotide sequence ID" value="NM_174660.2"/>
</dbReference>
<dbReference type="SMR" id="P32007"/>
<dbReference type="BioGRID" id="159733">
    <property type="interactions" value="1"/>
</dbReference>
<dbReference type="FunCoup" id="P32007">
    <property type="interactions" value="1648"/>
</dbReference>
<dbReference type="STRING" id="9913.ENSBTAP00000055370"/>
<dbReference type="PaxDb" id="9913-ENSBTAP00000055370"/>
<dbReference type="PeptideAtlas" id="P32007"/>
<dbReference type="GeneID" id="282480"/>
<dbReference type="KEGG" id="bta:282480"/>
<dbReference type="CTD" id="293"/>
<dbReference type="VEuPathDB" id="HostDB:ENSBTAG00000047418"/>
<dbReference type="eggNOG" id="KOG0749">
    <property type="taxonomic scope" value="Eukaryota"/>
</dbReference>
<dbReference type="HOGENOM" id="CLU_015166_12_0_1"/>
<dbReference type="InParanoid" id="P32007"/>
<dbReference type="OMA" id="CFARTLK"/>
<dbReference type="OrthoDB" id="270584at2759"/>
<dbReference type="TreeFam" id="TF300743"/>
<dbReference type="Reactome" id="R-BTA-1268020">
    <property type="pathway name" value="Mitochondrial protein import"/>
</dbReference>
<dbReference type="Reactome" id="R-BTA-83936">
    <property type="pathway name" value="Transport of nucleosides and free purine and pyrimidine bases across the plasma membrane"/>
</dbReference>
<dbReference type="Reactome" id="R-BTA-9837999">
    <property type="pathway name" value="Mitochondrial protein degradation"/>
</dbReference>
<dbReference type="Proteomes" id="UP000009136">
    <property type="component" value="Chromosome 26"/>
</dbReference>
<dbReference type="Bgee" id="ENSBTAG00000047418">
    <property type="expression patterns" value="Expressed in digestive system secreted substance and 103 other cell types or tissues"/>
</dbReference>
<dbReference type="GO" id="GO:0016020">
    <property type="term" value="C:membrane"/>
    <property type="evidence" value="ECO:0000250"/>
    <property type="project" value="UniProtKB"/>
</dbReference>
<dbReference type="GO" id="GO:0005743">
    <property type="term" value="C:mitochondrial inner membrane"/>
    <property type="evidence" value="ECO:0007669"/>
    <property type="project" value="UniProtKB-SubCell"/>
</dbReference>
<dbReference type="GO" id="GO:0005471">
    <property type="term" value="F:ATP:ADP antiporter activity"/>
    <property type="evidence" value="ECO:0007669"/>
    <property type="project" value="InterPro"/>
</dbReference>
<dbReference type="GO" id="GO:0006915">
    <property type="term" value="P:apoptotic process"/>
    <property type="evidence" value="ECO:0007669"/>
    <property type="project" value="UniProtKB-KW"/>
</dbReference>
<dbReference type="GO" id="GO:0140021">
    <property type="term" value="P:mitochondrial ADP transmembrane transport"/>
    <property type="evidence" value="ECO:0007669"/>
    <property type="project" value="InterPro"/>
</dbReference>
<dbReference type="GO" id="GO:1990544">
    <property type="term" value="P:mitochondrial ATP transmembrane transport"/>
    <property type="evidence" value="ECO:0007669"/>
    <property type="project" value="InterPro"/>
</dbReference>
<dbReference type="GO" id="GO:1901029">
    <property type="term" value="P:negative regulation of mitochondrial outer membrane permeabilization involved in apoptotic signaling pathway"/>
    <property type="evidence" value="ECO:0000318"/>
    <property type="project" value="GO_Central"/>
</dbReference>
<dbReference type="FunFam" id="1.50.40.10:FF:000002">
    <property type="entry name" value="Putative ADP/ATP translocase 2-like"/>
    <property type="match status" value="1"/>
</dbReference>
<dbReference type="Gene3D" id="1.50.40.10">
    <property type="entry name" value="Mitochondrial carrier domain"/>
    <property type="match status" value="1"/>
</dbReference>
<dbReference type="InterPro" id="IPR002113">
    <property type="entry name" value="ADT_euk_type"/>
</dbReference>
<dbReference type="InterPro" id="IPR002067">
    <property type="entry name" value="Mit_carrier"/>
</dbReference>
<dbReference type="InterPro" id="IPR018108">
    <property type="entry name" value="Mitochondrial_sb/sol_carrier"/>
</dbReference>
<dbReference type="InterPro" id="IPR023395">
    <property type="entry name" value="Mt_carrier_dom_sf"/>
</dbReference>
<dbReference type="PANTHER" id="PTHR45635">
    <property type="entry name" value="ADP,ATP CARRIER PROTEIN 1-RELATED-RELATED"/>
    <property type="match status" value="1"/>
</dbReference>
<dbReference type="PANTHER" id="PTHR45635:SF13">
    <property type="entry name" value="ADP_ATP TRANSLOCASE 3"/>
    <property type="match status" value="1"/>
</dbReference>
<dbReference type="Pfam" id="PF00153">
    <property type="entry name" value="Mito_carr"/>
    <property type="match status" value="3"/>
</dbReference>
<dbReference type="PRINTS" id="PR00927">
    <property type="entry name" value="ADPTRNSLCASE"/>
</dbReference>
<dbReference type="PRINTS" id="PR00926">
    <property type="entry name" value="MITOCARRIER"/>
</dbReference>
<dbReference type="SUPFAM" id="SSF103506">
    <property type="entry name" value="Mitochondrial carrier"/>
    <property type="match status" value="1"/>
</dbReference>
<dbReference type="PROSITE" id="PS50920">
    <property type="entry name" value="SOLCAR"/>
    <property type="match status" value="3"/>
</dbReference>
<evidence type="ECO:0000250" key="1">
    <source>
        <dbReference type="UniProtKB" id="G2QNH0"/>
    </source>
</evidence>
<evidence type="ECO:0000250" key="2">
    <source>
        <dbReference type="UniProtKB" id="P02722"/>
    </source>
</evidence>
<evidence type="ECO:0000250" key="3">
    <source>
        <dbReference type="UniProtKB" id="P12235"/>
    </source>
</evidence>
<evidence type="ECO:0000250" key="4">
    <source>
        <dbReference type="UniProtKB" id="P12236"/>
    </source>
</evidence>
<evidence type="ECO:0000250" key="5">
    <source>
        <dbReference type="UniProtKB" id="P48962"/>
    </source>
</evidence>
<evidence type="ECO:0000255" key="6"/>
<evidence type="ECO:0000269" key="7">
    <source>
    </source>
</evidence>
<evidence type="ECO:0000303" key="8">
    <source>
    </source>
</evidence>
<evidence type="ECO:0000303" key="9">
    <source>
    </source>
</evidence>
<evidence type="ECO:0000305" key="10"/>
<proteinExistence type="evidence at protein level"/>
<keyword id="KW-0007">Acetylation</keyword>
<keyword id="KW-0050">Antiport</keyword>
<keyword id="KW-0053">Apoptosis</keyword>
<keyword id="KW-0903">Direct protein sequencing</keyword>
<keyword id="KW-0472">Membrane</keyword>
<keyword id="KW-0488">Methylation</keyword>
<keyword id="KW-0496">Mitochondrion</keyword>
<keyword id="KW-0999">Mitochondrion inner membrane</keyword>
<keyword id="KW-1185">Reference proteome</keyword>
<keyword id="KW-0677">Repeat</keyword>
<keyword id="KW-0812">Transmembrane</keyword>
<keyword id="KW-1133">Transmembrane helix</keyword>
<keyword id="KW-0813">Transport</keyword>